<protein>
    <recommendedName>
        <fullName evidence="1">ATP synthase gamma chain</fullName>
    </recommendedName>
    <alternativeName>
        <fullName evidence="1">ATP synthase F1 sector gamma subunit</fullName>
    </alternativeName>
    <alternativeName>
        <fullName evidence="1">F-ATPase gamma subunit</fullName>
    </alternativeName>
</protein>
<keyword id="KW-0066">ATP synthesis</keyword>
<keyword id="KW-1003">Cell membrane</keyword>
<keyword id="KW-0139">CF(1)</keyword>
<keyword id="KW-0375">Hydrogen ion transport</keyword>
<keyword id="KW-0406">Ion transport</keyword>
<keyword id="KW-0472">Membrane</keyword>
<keyword id="KW-0813">Transport</keyword>
<comment type="function">
    <text evidence="1">Produces ATP from ADP in the presence of a proton gradient across the membrane. The gamma chain is believed to be important in regulating ATPase activity and the flow of protons through the CF(0) complex.</text>
</comment>
<comment type="subunit">
    <text evidence="1">F-type ATPases have 2 components, CF(1) - the catalytic core - and CF(0) - the membrane proton channel. CF(1) has five subunits: alpha(3), beta(3), gamma(1), delta(1), epsilon(1). CF(0) has three main subunits: a, b and c.</text>
</comment>
<comment type="subcellular location">
    <subcellularLocation>
        <location evidence="1">Cell membrane</location>
        <topology evidence="1">Peripheral membrane protein</topology>
    </subcellularLocation>
</comment>
<comment type="similarity">
    <text evidence="1">Belongs to the ATPase gamma chain family.</text>
</comment>
<sequence>MAGSLSEIKAKIISTEKTSKITSAMRMVSSAKLVKSEQAARDFQIYASKIRQITTDLLKSELTIGSDNPMLVSRPVKKTGYIVITSDKGLVGGYNSKILKSVMDMITEYHADGDYEIISIGSVGSDFFKARGMNVAFELRGLADQPSFEQVRQIISQSVDMFVNEIFDELYVCYNHHVNSLTSQVRVQQMLPISDLVADEAAEEGVTGFELEPNRHDILDQLLPQFTESLIYGAIIDAKTAEHAAGMTAMQTATDNAKNVINDLTIQYNRARQAAITQEITEIVAGANALE</sequence>
<gene>
    <name evidence="1" type="primary">atpG</name>
    <name type="ordered locus">MGAS10750_Spy0664</name>
</gene>
<dbReference type="EMBL" id="CP000262">
    <property type="protein sequence ID" value="ABF37614.1"/>
    <property type="molecule type" value="Genomic_DNA"/>
</dbReference>
<dbReference type="SMR" id="Q1J7G0"/>
<dbReference type="KEGG" id="spi:MGAS10750_Spy0664"/>
<dbReference type="HOGENOM" id="CLU_050669_0_1_9"/>
<dbReference type="Proteomes" id="UP000002434">
    <property type="component" value="Chromosome"/>
</dbReference>
<dbReference type="GO" id="GO:0005886">
    <property type="term" value="C:plasma membrane"/>
    <property type="evidence" value="ECO:0007669"/>
    <property type="project" value="UniProtKB-SubCell"/>
</dbReference>
<dbReference type="GO" id="GO:0045259">
    <property type="term" value="C:proton-transporting ATP synthase complex"/>
    <property type="evidence" value="ECO:0007669"/>
    <property type="project" value="UniProtKB-KW"/>
</dbReference>
<dbReference type="GO" id="GO:0005524">
    <property type="term" value="F:ATP binding"/>
    <property type="evidence" value="ECO:0007669"/>
    <property type="project" value="UniProtKB-UniRule"/>
</dbReference>
<dbReference type="GO" id="GO:0046933">
    <property type="term" value="F:proton-transporting ATP synthase activity, rotational mechanism"/>
    <property type="evidence" value="ECO:0007669"/>
    <property type="project" value="UniProtKB-UniRule"/>
</dbReference>
<dbReference type="GO" id="GO:0042777">
    <property type="term" value="P:proton motive force-driven plasma membrane ATP synthesis"/>
    <property type="evidence" value="ECO:0007669"/>
    <property type="project" value="UniProtKB-UniRule"/>
</dbReference>
<dbReference type="CDD" id="cd12151">
    <property type="entry name" value="F1-ATPase_gamma"/>
    <property type="match status" value="1"/>
</dbReference>
<dbReference type="FunFam" id="3.40.1380.10:FF:000002">
    <property type="entry name" value="ATP synthase gamma chain"/>
    <property type="match status" value="1"/>
</dbReference>
<dbReference type="Gene3D" id="3.40.1380.10">
    <property type="match status" value="1"/>
</dbReference>
<dbReference type="Gene3D" id="1.10.287.80">
    <property type="entry name" value="ATP synthase, gamma subunit, helix hairpin domain"/>
    <property type="match status" value="1"/>
</dbReference>
<dbReference type="HAMAP" id="MF_00815">
    <property type="entry name" value="ATP_synth_gamma_bact"/>
    <property type="match status" value="1"/>
</dbReference>
<dbReference type="InterPro" id="IPR035968">
    <property type="entry name" value="ATP_synth_F1_ATPase_gsu"/>
</dbReference>
<dbReference type="InterPro" id="IPR000131">
    <property type="entry name" value="ATP_synth_F1_gsu"/>
</dbReference>
<dbReference type="InterPro" id="IPR023632">
    <property type="entry name" value="ATP_synth_F1_gsu_CS"/>
</dbReference>
<dbReference type="NCBIfam" id="TIGR01146">
    <property type="entry name" value="ATPsyn_F1gamma"/>
    <property type="match status" value="1"/>
</dbReference>
<dbReference type="NCBIfam" id="NF004147">
    <property type="entry name" value="PRK05621.2-1"/>
    <property type="match status" value="1"/>
</dbReference>
<dbReference type="PANTHER" id="PTHR11693">
    <property type="entry name" value="ATP SYNTHASE GAMMA CHAIN"/>
    <property type="match status" value="1"/>
</dbReference>
<dbReference type="PANTHER" id="PTHR11693:SF22">
    <property type="entry name" value="ATP SYNTHASE SUBUNIT GAMMA, MITOCHONDRIAL"/>
    <property type="match status" value="1"/>
</dbReference>
<dbReference type="Pfam" id="PF00231">
    <property type="entry name" value="ATP-synt"/>
    <property type="match status" value="1"/>
</dbReference>
<dbReference type="PRINTS" id="PR00126">
    <property type="entry name" value="ATPASEGAMMA"/>
</dbReference>
<dbReference type="SUPFAM" id="SSF52943">
    <property type="entry name" value="ATP synthase (F1-ATPase), gamma subunit"/>
    <property type="match status" value="1"/>
</dbReference>
<dbReference type="PROSITE" id="PS00153">
    <property type="entry name" value="ATPASE_GAMMA"/>
    <property type="match status" value="1"/>
</dbReference>
<organism>
    <name type="scientific">Streptococcus pyogenes serotype M4 (strain MGAS10750)</name>
    <dbReference type="NCBI Taxonomy" id="370554"/>
    <lineage>
        <taxon>Bacteria</taxon>
        <taxon>Bacillati</taxon>
        <taxon>Bacillota</taxon>
        <taxon>Bacilli</taxon>
        <taxon>Lactobacillales</taxon>
        <taxon>Streptococcaceae</taxon>
        <taxon>Streptococcus</taxon>
    </lineage>
</organism>
<accession>Q1J7G0</accession>
<evidence type="ECO:0000255" key="1">
    <source>
        <dbReference type="HAMAP-Rule" id="MF_00815"/>
    </source>
</evidence>
<name>ATPG_STRPF</name>
<feature type="chain" id="PRO_1000053352" description="ATP synthase gamma chain">
    <location>
        <begin position="1"/>
        <end position="291"/>
    </location>
</feature>
<reference key="1">
    <citation type="journal article" date="2006" name="Proc. Natl. Acad. Sci. U.S.A.">
        <title>Molecular genetic anatomy of inter- and intraserotype variation in the human bacterial pathogen group A Streptococcus.</title>
        <authorList>
            <person name="Beres S.B."/>
            <person name="Richter E.W."/>
            <person name="Nagiec M.J."/>
            <person name="Sumby P."/>
            <person name="Porcella S.F."/>
            <person name="DeLeo F.R."/>
            <person name="Musser J.M."/>
        </authorList>
    </citation>
    <scope>NUCLEOTIDE SEQUENCE [LARGE SCALE GENOMIC DNA]</scope>
    <source>
        <strain>MGAS10750</strain>
    </source>
</reference>
<proteinExistence type="inferred from homology"/>